<feature type="chain" id="PRO_0000081413" description="Ethylene receptor 1">
    <location>
        <begin position="1"/>
        <end position="735"/>
    </location>
</feature>
<feature type="transmembrane region" description="Helical" evidence="4">
    <location>
        <begin position="23"/>
        <end position="43"/>
    </location>
</feature>
<feature type="transmembrane region" description="Helical" evidence="4">
    <location>
        <begin position="54"/>
        <end position="74"/>
    </location>
</feature>
<feature type="transmembrane region" description="Helical" evidence="4">
    <location>
        <begin position="92"/>
        <end position="112"/>
    </location>
</feature>
<feature type="domain" description="GAF">
    <location>
        <begin position="158"/>
        <end position="307"/>
    </location>
</feature>
<feature type="domain" description="Histidine kinase" evidence="5">
    <location>
        <begin position="350"/>
        <end position="586"/>
    </location>
</feature>
<feature type="domain" description="Response regulatory" evidence="6">
    <location>
        <begin position="609"/>
        <end position="726"/>
    </location>
</feature>
<feature type="binding site" evidence="1">
    <location>
        <position position="65"/>
    </location>
    <ligand>
        <name>Cu cation</name>
        <dbReference type="ChEBI" id="CHEBI:23378"/>
    </ligand>
</feature>
<feature type="binding site" evidence="1">
    <location>
        <position position="69"/>
    </location>
    <ligand>
        <name>Cu cation</name>
        <dbReference type="ChEBI" id="CHEBI:23378"/>
    </ligand>
</feature>
<feature type="modified residue" description="Phosphohistidine; by autocatalysis" evidence="2 5">
    <location>
        <position position="353"/>
    </location>
</feature>
<feature type="modified residue" description="4-aspartylphosphate" evidence="6">
    <location>
        <position position="657"/>
    </location>
</feature>
<feature type="disulfide bond" description="Interchain" evidence="1">
    <location>
        <position position="4"/>
    </location>
</feature>
<feature type="disulfide bond" description="Interchain" evidence="1">
    <location>
        <position position="6"/>
    </location>
</feature>
<feature type="cross-link" description="Glycyl lysine isopeptide (Lys-Gly) (interchain with G-Cter in ubiquitin)" evidence="3">
    <location>
        <position position="711"/>
    </location>
</feature>
<proteinExistence type="evidence at transcript level"/>
<keyword id="KW-0067">ATP-binding</keyword>
<keyword id="KW-0186">Copper</keyword>
<keyword id="KW-1015">Disulfide bond</keyword>
<keyword id="KW-0256">Endoplasmic reticulum</keyword>
<keyword id="KW-0936">Ethylene signaling pathway</keyword>
<keyword id="KW-1017">Isopeptide bond</keyword>
<keyword id="KW-0418">Kinase</keyword>
<keyword id="KW-0472">Membrane</keyword>
<keyword id="KW-0479">Metal-binding</keyword>
<keyword id="KW-0547">Nucleotide-binding</keyword>
<keyword id="KW-0597">Phosphoprotein</keyword>
<keyword id="KW-0675">Receptor</keyword>
<keyword id="KW-0808">Transferase</keyword>
<keyword id="KW-0812">Transmembrane</keyword>
<keyword id="KW-1133">Transmembrane helix</keyword>
<keyword id="KW-0902">Two-component regulatory system</keyword>
<keyword id="KW-0832">Ubl conjugation</keyword>
<name>ETR1_BRAOL</name>
<reference key="1">
    <citation type="online journal article" date="1998" name="Plant Gene Register">
        <title>Molecular cloning and sequencing of a broccoli cDNA encoding an ETR-type ethylene receptor.</title>
        <authorList>
            <person name="Chen H.-H."/>
            <person name="Charng Y.-Y."/>
            <person name="Yang S.F."/>
            <person name="Shaw J.-F."/>
        </authorList>
        <locator>PGR98-088</locator>
    </citation>
    <scope>NUCLEOTIDE SEQUENCE [MRNA]</scope>
</reference>
<dbReference type="EC" id="2.7.13.3"/>
<dbReference type="EMBL" id="AF047476">
    <property type="protein sequence ID" value="AAC39497.1"/>
    <property type="molecule type" value="mRNA"/>
</dbReference>
<dbReference type="SMR" id="O49230"/>
<dbReference type="BRENDA" id="2.7.13.3">
    <property type="organism ID" value="947"/>
</dbReference>
<dbReference type="GO" id="GO:0005789">
    <property type="term" value="C:endoplasmic reticulum membrane"/>
    <property type="evidence" value="ECO:0007669"/>
    <property type="project" value="UniProtKB-SubCell"/>
</dbReference>
<dbReference type="GO" id="GO:0005524">
    <property type="term" value="F:ATP binding"/>
    <property type="evidence" value="ECO:0007669"/>
    <property type="project" value="UniProtKB-KW"/>
</dbReference>
<dbReference type="GO" id="GO:0051740">
    <property type="term" value="F:ethylene binding"/>
    <property type="evidence" value="ECO:0007669"/>
    <property type="project" value="EnsemblPlants"/>
</dbReference>
<dbReference type="GO" id="GO:0038199">
    <property type="term" value="F:ethylene receptor activity"/>
    <property type="evidence" value="ECO:0007669"/>
    <property type="project" value="EnsemblPlants"/>
</dbReference>
<dbReference type="GO" id="GO:0042802">
    <property type="term" value="F:identical protein binding"/>
    <property type="evidence" value="ECO:0007669"/>
    <property type="project" value="EnsemblPlants"/>
</dbReference>
<dbReference type="GO" id="GO:0046872">
    <property type="term" value="F:metal ion binding"/>
    <property type="evidence" value="ECO:0007669"/>
    <property type="project" value="UniProtKB-KW"/>
</dbReference>
<dbReference type="GO" id="GO:0000155">
    <property type="term" value="F:phosphorelay sensor kinase activity"/>
    <property type="evidence" value="ECO:0007669"/>
    <property type="project" value="InterPro"/>
</dbReference>
<dbReference type="GO" id="GO:0051301">
    <property type="term" value="P:cell division"/>
    <property type="evidence" value="ECO:0007669"/>
    <property type="project" value="EnsemblPlants"/>
</dbReference>
<dbReference type="GO" id="GO:0009690">
    <property type="term" value="P:cytokinin metabolic process"/>
    <property type="evidence" value="ECO:0007669"/>
    <property type="project" value="EnsemblPlants"/>
</dbReference>
<dbReference type="GO" id="GO:0052544">
    <property type="term" value="P:defense response by callose deposition in cell wall"/>
    <property type="evidence" value="ECO:0007669"/>
    <property type="project" value="EnsemblPlants"/>
</dbReference>
<dbReference type="GO" id="GO:0042742">
    <property type="term" value="P:defense response to bacterium"/>
    <property type="evidence" value="ECO:0007669"/>
    <property type="project" value="EnsemblPlants"/>
</dbReference>
<dbReference type="GO" id="GO:0009727">
    <property type="term" value="P:detection of ethylene stimulus"/>
    <property type="evidence" value="ECO:0007669"/>
    <property type="project" value="EnsemblPlants"/>
</dbReference>
<dbReference type="GO" id="GO:0050665">
    <property type="term" value="P:hydrogen peroxide biosynthetic process"/>
    <property type="evidence" value="ECO:0007669"/>
    <property type="project" value="EnsemblPlants"/>
</dbReference>
<dbReference type="GO" id="GO:0010105">
    <property type="term" value="P:negative regulation of ethylene-activated signaling pathway"/>
    <property type="evidence" value="ECO:0007669"/>
    <property type="project" value="UniProtKB-ARBA"/>
</dbReference>
<dbReference type="GO" id="GO:0010087">
    <property type="term" value="P:phloem or xylem histogenesis"/>
    <property type="evidence" value="ECO:0007669"/>
    <property type="project" value="EnsemblPlants"/>
</dbReference>
<dbReference type="GO" id="GO:1900140">
    <property type="term" value="P:regulation of seedling development"/>
    <property type="evidence" value="ECO:0007669"/>
    <property type="project" value="EnsemblPlants"/>
</dbReference>
<dbReference type="GO" id="GO:0010119">
    <property type="term" value="P:regulation of stomatal movement"/>
    <property type="evidence" value="ECO:0007669"/>
    <property type="project" value="EnsemblPlants"/>
</dbReference>
<dbReference type="GO" id="GO:0009737">
    <property type="term" value="P:response to abscisic acid"/>
    <property type="evidence" value="ECO:0007669"/>
    <property type="project" value="EnsemblPlants"/>
</dbReference>
<dbReference type="GO" id="GO:0009733">
    <property type="term" value="P:response to auxin"/>
    <property type="evidence" value="ECO:0007669"/>
    <property type="project" value="EnsemblPlants"/>
</dbReference>
<dbReference type="GO" id="GO:0009739">
    <property type="term" value="P:response to gibberellin"/>
    <property type="evidence" value="ECO:0007669"/>
    <property type="project" value="EnsemblPlants"/>
</dbReference>
<dbReference type="GO" id="GO:0009408">
    <property type="term" value="P:response to heat"/>
    <property type="evidence" value="ECO:0007669"/>
    <property type="project" value="EnsemblPlants"/>
</dbReference>
<dbReference type="GO" id="GO:0009625">
    <property type="term" value="P:response to insect"/>
    <property type="evidence" value="ECO:0007669"/>
    <property type="project" value="EnsemblPlants"/>
</dbReference>
<dbReference type="GO" id="GO:0002237">
    <property type="term" value="P:response to molecule of bacterial origin"/>
    <property type="evidence" value="ECO:0007669"/>
    <property type="project" value="EnsemblPlants"/>
</dbReference>
<dbReference type="GO" id="GO:0009651">
    <property type="term" value="P:response to salt stress"/>
    <property type="evidence" value="ECO:0007669"/>
    <property type="project" value="EnsemblPlants"/>
</dbReference>
<dbReference type="GO" id="GO:0010162">
    <property type="term" value="P:seed dormancy process"/>
    <property type="evidence" value="ECO:0007669"/>
    <property type="project" value="EnsemblPlants"/>
</dbReference>
<dbReference type="CDD" id="cd00082">
    <property type="entry name" value="HisKA"/>
    <property type="match status" value="1"/>
</dbReference>
<dbReference type="CDD" id="cd19933">
    <property type="entry name" value="REC_ETR-like"/>
    <property type="match status" value="1"/>
</dbReference>
<dbReference type="FunFam" id="3.40.50.2300:FF:000192">
    <property type="entry name" value="Ethylene receptor"/>
    <property type="match status" value="1"/>
</dbReference>
<dbReference type="FunFam" id="1.10.287.130:FF:000004">
    <property type="entry name" value="Ethylene receptor 1"/>
    <property type="match status" value="1"/>
</dbReference>
<dbReference type="FunFam" id="3.30.565.10:FF:000030">
    <property type="entry name" value="Ethylene receptor 1"/>
    <property type="match status" value="1"/>
</dbReference>
<dbReference type="FunFam" id="3.30.450.40:FF:000026">
    <property type="entry name" value="Ethylene response sensor"/>
    <property type="match status" value="1"/>
</dbReference>
<dbReference type="Gene3D" id="1.10.287.130">
    <property type="match status" value="1"/>
</dbReference>
<dbReference type="Gene3D" id="3.30.450.40">
    <property type="match status" value="1"/>
</dbReference>
<dbReference type="Gene3D" id="3.40.50.2300">
    <property type="match status" value="1"/>
</dbReference>
<dbReference type="Gene3D" id="3.30.565.10">
    <property type="entry name" value="Histidine kinase-like ATPase, C-terminal domain"/>
    <property type="match status" value="1"/>
</dbReference>
<dbReference type="InterPro" id="IPR011006">
    <property type="entry name" value="CheY-like_superfamily"/>
</dbReference>
<dbReference type="InterPro" id="IPR014525">
    <property type="entry name" value="ETR"/>
</dbReference>
<dbReference type="InterPro" id="IPR003018">
    <property type="entry name" value="GAF"/>
</dbReference>
<dbReference type="InterPro" id="IPR029016">
    <property type="entry name" value="GAF-like_dom_sf"/>
</dbReference>
<dbReference type="InterPro" id="IPR036890">
    <property type="entry name" value="HATPase_C_sf"/>
</dbReference>
<dbReference type="InterPro" id="IPR005467">
    <property type="entry name" value="His_kinase_dom"/>
</dbReference>
<dbReference type="InterPro" id="IPR003661">
    <property type="entry name" value="HisK_dim/P_dom"/>
</dbReference>
<dbReference type="InterPro" id="IPR036097">
    <property type="entry name" value="HisK_dim/P_sf"/>
</dbReference>
<dbReference type="InterPro" id="IPR004358">
    <property type="entry name" value="Sig_transdc_His_kin-like_C"/>
</dbReference>
<dbReference type="InterPro" id="IPR001789">
    <property type="entry name" value="Sig_transdc_resp-reg_receiver"/>
</dbReference>
<dbReference type="PANTHER" id="PTHR24423:SF615">
    <property type="entry name" value="ETHYLENE RECEPTOR 1"/>
    <property type="match status" value="1"/>
</dbReference>
<dbReference type="PANTHER" id="PTHR24423">
    <property type="entry name" value="TWO-COMPONENT SENSOR HISTIDINE KINASE"/>
    <property type="match status" value="1"/>
</dbReference>
<dbReference type="Pfam" id="PF25487">
    <property type="entry name" value="ETR1_N"/>
    <property type="match status" value="1"/>
</dbReference>
<dbReference type="Pfam" id="PF01590">
    <property type="entry name" value="GAF"/>
    <property type="match status" value="1"/>
</dbReference>
<dbReference type="Pfam" id="PF02518">
    <property type="entry name" value="HATPase_c"/>
    <property type="match status" value="1"/>
</dbReference>
<dbReference type="Pfam" id="PF00512">
    <property type="entry name" value="HisKA"/>
    <property type="match status" value="1"/>
</dbReference>
<dbReference type="Pfam" id="PF00072">
    <property type="entry name" value="Response_reg"/>
    <property type="match status" value="1"/>
</dbReference>
<dbReference type="PIRSF" id="PIRSF026389">
    <property type="entry name" value="Ethyln_sen_HK"/>
    <property type="match status" value="1"/>
</dbReference>
<dbReference type="PRINTS" id="PR00344">
    <property type="entry name" value="BCTRLSENSOR"/>
</dbReference>
<dbReference type="SMART" id="SM00065">
    <property type="entry name" value="GAF"/>
    <property type="match status" value="1"/>
</dbReference>
<dbReference type="SMART" id="SM00387">
    <property type="entry name" value="HATPase_c"/>
    <property type="match status" value="1"/>
</dbReference>
<dbReference type="SMART" id="SM00388">
    <property type="entry name" value="HisKA"/>
    <property type="match status" value="1"/>
</dbReference>
<dbReference type="SMART" id="SM00448">
    <property type="entry name" value="REC"/>
    <property type="match status" value="1"/>
</dbReference>
<dbReference type="SUPFAM" id="SSF55874">
    <property type="entry name" value="ATPase domain of HSP90 chaperone/DNA topoisomerase II/histidine kinase"/>
    <property type="match status" value="1"/>
</dbReference>
<dbReference type="SUPFAM" id="SSF52172">
    <property type="entry name" value="CheY-like"/>
    <property type="match status" value="1"/>
</dbReference>
<dbReference type="SUPFAM" id="SSF55781">
    <property type="entry name" value="GAF domain-like"/>
    <property type="match status" value="1"/>
</dbReference>
<dbReference type="SUPFAM" id="SSF47384">
    <property type="entry name" value="Homodimeric domain of signal transducing histidine kinase"/>
    <property type="match status" value="1"/>
</dbReference>
<dbReference type="PROSITE" id="PS50109">
    <property type="entry name" value="HIS_KIN"/>
    <property type="match status" value="1"/>
</dbReference>
<dbReference type="PROSITE" id="PS50110">
    <property type="entry name" value="RESPONSE_REGULATORY"/>
    <property type="match status" value="1"/>
</dbReference>
<evidence type="ECO:0000250" key="1"/>
<evidence type="ECO:0000250" key="2">
    <source>
        <dbReference type="UniProtKB" id="P49333"/>
    </source>
</evidence>
<evidence type="ECO:0000250" key="3">
    <source>
        <dbReference type="UniProtKB" id="Q0WPQ2"/>
    </source>
</evidence>
<evidence type="ECO:0000255" key="4"/>
<evidence type="ECO:0000255" key="5">
    <source>
        <dbReference type="PROSITE-ProRule" id="PRU00107"/>
    </source>
</evidence>
<evidence type="ECO:0000255" key="6">
    <source>
        <dbReference type="PROSITE-ProRule" id="PRU00169"/>
    </source>
</evidence>
<evidence type="ECO:0000305" key="7"/>
<comment type="function">
    <text evidence="1">May act early in the ethylene signal transduction pathway, possibly as an ethylene receptor, or as a regulator of the pathway.</text>
</comment>
<comment type="catalytic activity">
    <reaction>
        <text>ATP + protein L-histidine = ADP + protein N-phospho-L-histidine.</text>
        <dbReference type="EC" id="2.7.13.3"/>
    </reaction>
</comment>
<comment type="cofactor">
    <cofactor evidence="1">
        <name>Cu cation</name>
        <dbReference type="ChEBI" id="CHEBI:23378"/>
    </cofactor>
    <text evidence="1">Binds 1 copper ion per dimer.</text>
</comment>
<comment type="subunit">
    <text evidence="1">Homodimer; disulfide-linked.</text>
</comment>
<comment type="subcellular location">
    <subcellularLocation>
        <location evidence="1">Endoplasmic reticulum membrane</location>
        <topology evidence="1">Multi-pass membrane protein</topology>
    </subcellularLocation>
</comment>
<comment type="PTM">
    <text evidence="1">Activation probably requires a transfer of a phosphate group between a His in the transmitter domain and an Asp of the receiver domain.</text>
</comment>
<comment type="similarity">
    <text evidence="7">Belongs to the ethylene receptor family.</text>
</comment>
<accession>O49230</accession>
<sequence length="735" mass="82240">MEVCNCIEPQWPADELLMKYQYISDFFIAVAYFSIPLELIYFVKKSAVFPYRWVLVQFGAFIVLCGATHLINLWTFTTHSRTVALVMTTAKVLTAVVSCATALMLVHIIPDLLSVKTRELFLKNKAAELDREMGLIRTQEETGRHVRMLTHEIRSTLDRHTILKTTLVELGRTLALEECALWMPTRTGLELQLSYTLRQQHPVEYTVPIQLPVINQVFGTSRAVKISPNSPVARLRPVSGKYLLGEVVAVRVPLLHLSNFQINDWPELSTKRYALMVLMLPSDSARQWHVHELELVEVVADQVAVALSHAAILEESMRARDLLMEQNVALDIARREAETAIRARNDFLAVMNHEMRTPMHAIIALSSLLQETELTPEQRLMVETVLKSSSLLATLMNDVLDLSRLEDGSLQLELGTFNLHTLFREVLNLIKPIAVVKKLPITLNLAPDLPEFVVGDEKRLMQIILNIVGNAVKFSKQGSISVTALVTKSDNRAPPDFFVVPTGSHFYLRVKVKDLGAGINPQDIPKLFTKFAQTQSLATRSSGGSGLGLAISKRFVNLMEGNIWIESEGVGKGCTAIFDVKLAISNESKQSGIPKVPANPQHVNFAGLKVLVMDENGVSRMVTKGLLVHLGCEVTTVSSNEECLRVVSHEHRVVFMDVCTPGVENYQIALRIHEKFTKRHQRPLLVALTGNTDKSTKEKCMSFGLDGVLLKPVSLDNMRNVLSDRLEHRVLYEAM</sequence>
<protein>
    <recommendedName>
        <fullName>Ethylene receptor 1</fullName>
        <ecNumber>2.7.13.3</ecNumber>
    </recommendedName>
</protein>
<organism>
    <name type="scientific">Brassica oleracea</name>
    <name type="common">Wild cabbage</name>
    <dbReference type="NCBI Taxonomy" id="3712"/>
    <lineage>
        <taxon>Eukaryota</taxon>
        <taxon>Viridiplantae</taxon>
        <taxon>Streptophyta</taxon>
        <taxon>Embryophyta</taxon>
        <taxon>Tracheophyta</taxon>
        <taxon>Spermatophyta</taxon>
        <taxon>Magnoliopsida</taxon>
        <taxon>eudicotyledons</taxon>
        <taxon>Gunneridae</taxon>
        <taxon>Pentapetalae</taxon>
        <taxon>rosids</taxon>
        <taxon>malvids</taxon>
        <taxon>Brassicales</taxon>
        <taxon>Brassicaceae</taxon>
        <taxon>Brassiceae</taxon>
        <taxon>Brassica</taxon>
    </lineage>
</organism>
<gene>
    <name type="primary">ETR1</name>
</gene>